<evidence type="ECO:0000255" key="1">
    <source>
        <dbReference type="HAMAP-Rule" id="MF_00227"/>
    </source>
</evidence>
<sequence>MTDYCYPKAKRLLKPAEFKPVFNQPLFKVHQTHFMAFAYDSDHLQARLGMAITKKKIPTAVARNTIKRIIREQFRHTHAQLPALDVVFILKKSTKALSNEQMRQEISDILSKVISKQRRATAADVKHKDK</sequence>
<organism>
    <name type="scientific">Psychrobacter sp. (strain PRwf-1)</name>
    <dbReference type="NCBI Taxonomy" id="349106"/>
    <lineage>
        <taxon>Bacteria</taxon>
        <taxon>Pseudomonadati</taxon>
        <taxon>Pseudomonadota</taxon>
        <taxon>Gammaproteobacteria</taxon>
        <taxon>Moraxellales</taxon>
        <taxon>Moraxellaceae</taxon>
        <taxon>Psychrobacter</taxon>
    </lineage>
</organism>
<name>RNPA_PSYWF</name>
<feature type="chain" id="PRO_1000100379" description="Ribonuclease P protein component">
    <location>
        <begin position="1"/>
        <end position="130"/>
    </location>
</feature>
<accession>A5WI39</accession>
<proteinExistence type="inferred from homology"/>
<keyword id="KW-0255">Endonuclease</keyword>
<keyword id="KW-0378">Hydrolase</keyword>
<keyword id="KW-0540">Nuclease</keyword>
<keyword id="KW-0694">RNA-binding</keyword>
<keyword id="KW-0819">tRNA processing</keyword>
<gene>
    <name evidence="1" type="primary">rnpA</name>
    <name type="ordered locus">PsycPRwf_2390</name>
</gene>
<dbReference type="EC" id="3.1.26.5" evidence="1"/>
<dbReference type="EMBL" id="CP000713">
    <property type="protein sequence ID" value="ABQ95330.1"/>
    <property type="molecule type" value="Genomic_DNA"/>
</dbReference>
<dbReference type="SMR" id="A5WI39"/>
<dbReference type="STRING" id="349106.PsycPRwf_2390"/>
<dbReference type="KEGG" id="prw:PsycPRwf_2390"/>
<dbReference type="eggNOG" id="COG0594">
    <property type="taxonomic scope" value="Bacteria"/>
</dbReference>
<dbReference type="HOGENOM" id="CLU_117179_11_0_6"/>
<dbReference type="GO" id="GO:0030677">
    <property type="term" value="C:ribonuclease P complex"/>
    <property type="evidence" value="ECO:0007669"/>
    <property type="project" value="TreeGrafter"/>
</dbReference>
<dbReference type="GO" id="GO:0042781">
    <property type="term" value="F:3'-tRNA processing endoribonuclease activity"/>
    <property type="evidence" value="ECO:0007669"/>
    <property type="project" value="TreeGrafter"/>
</dbReference>
<dbReference type="GO" id="GO:0004526">
    <property type="term" value="F:ribonuclease P activity"/>
    <property type="evidence" value="ECO:0007669"/>
    <property type="project" value="UniProtKB-UniRule"/>
</dbReference>
<dbReference type="GO" id="GO:0000049">
    <property type="term" value="F:tRNA binding"/>
    <property type="evidence" value="ECO:0007669"/>
    <property type="project" value="UniProtKB-UniRule"/>
</dbReference>
<dbReference type="GO" id="GO:0001682">
    <property type="term" value="P:tRNA 5'-leader removal"/>
    <property type="evidence" value="ECO:0007669"/>
    <property type="project" value="UniProtKB-UniRule"/>
</dbReference>
<dbReference type="Gene3D" id="3.30.230.10">
    <property type="match status" value="1"/>
</dbReference>
<dbReference type="HAMAP" id="MF_00227">
    <property type="entry name" value="RNase_P"/>
    <property type="match status" value="1"/>
</dbReference>
<dbReference type="InterPro" id="IPR020568">
    <property type="entry name" value="Ribosomal_Su5_D2-typ_SF"/>
</dbReference>
<dbReference type="InterPro" id="IPR014721">
    <property type="entry name" value="Ribsml_uS5_D2-typ_fold_subgr"/>
</dbReference>
<dbReference type="InterPro" id="IPR000100">
    <property type="entry name" value="RNase_P"/>
</dbReference>
<dbReference type="InterPro" id="IPR020539">
    <property type="entry name" value="RNase_P_CS"/>
</dbReference>
<dbReference type="NCBIfam" id="TIGR00188">
    <property type="entry name" value="rnpA"/>
    <property type="match status" value="1"/>
</dbReference>
<dbReference type="PANTHER" id="PTHR33992">
    <property type="entry name" value="RIBONUCLEASE P PROTEIN COMPONENT"/>
    <property type="match status" value="1"/>
</dbReference>
<dbReference type="PANTHER" id="PTHR33992:SF1">
    <property type="entry name" value="RIBONUCLEASE P PROTEIN COMPONENT"/>
    <property type="match status" value="1"/>
</dbReference>
<dbReference type="Pfam" id="PF00825">
    <property type="entry name" value="Ribonuclease_P"/>
    <property type="match status" value="1"/>
</dbReference>
<dbReference type="SUPFAM" id="SSF54211">
    <property type="entry name" value="Ribosomal protein S5 domain 2-like"/>
    <property type="match status" value="1"/>
</dbReference>
<dbReference type="PROSITE" id="PS00648">
    <property type="entry name" value="RIBONUCLEASE_P"/>
    <property type="match status" value="1"/>
</dbReference>
<comment type="function">
    <text evidence="1">RNaseP catalyzes the removal of the 5'-leader sequence from pre-tRNA to produce the mature 5'-terminus. It can also cleave other RNA substrates such as 4.5S RNA. The protein component plays an auxiliary but essential role in vivo by binding to the 5'-leader sequence and broadening the substrate specificity of the ribozyme.</text>
</comment>
<comment type="catalytic activity">
    <reaction evidence="1">
        <text>Endonucleolytic cleavage of RNA, removing 5'-extranucleotides from tRNA precursor.</text>
        <dbReference type="EC" id="3.1.26.5"/>
    </reaction>
</comment>
<comment type="subunit">
    <text evidence="1">Consists of a catalytic RNA component (M1 or rnpB) and a protein subunit.</text>
</comment>
<comment type="similarity">
    <text evidence="1">Belongs to the RnpA family.</text>
</comment>
<protein>
    <recommendedName>
        <fullName evidence="1">Ribonuclease P protein component</fullName>
        <shortName evidence="1">RNase P protein</shortName>
        <shortName evidence="1">RNaseP protein</shortName>
        <ecNumber evidence="1">3.1.26.5</ecNumber>
    </recommendedName>
    <alternativeName>
        <fullName evidence="1">Protein C5</fullName>
    </alternativeName>
</protein>
<reference key="1">
    <citation type="submission" date="2007-05" db="EMBL/GenBank/DDBJ databases">
        <title>Complete sequence of chromosome of Psychrobacter sp. PRwf-1.</title>
        <authorList>
            <consortium name="US DOE Joint Genome Institute"/>
            <person name="Copeland A."/>
            <person name="Lucas S."/>
            <person name="Lapidus A."/>
            <person name="Barry K."/>
            <person name="Detter J.C."/>
            <person name="Glavina del Rio T."/>
            <person name="Hammon N."/>
            <person name="Israni S."/>
            <person name="Dalin E."/>
            <person name="Tice H."/>
            <person name="Pitluck S."/>
            <person name="Chain P."/>
            <person name="Malfatti S."/>
            <person name="Shin M."/>
            <person name="Vergez L."/>
            <person name="Schmutz J."/>
            <person name="Larimer F."/>
            <person name="Land M."/>
            <person name="Hauser L."/>
            <person name="Kyrpides N."/>
            <person name="Kim E."/>
            <person name="Tiedje J."/>
            <person name="Richardson P."/>
        </authorList>
    </citation>
    <scope>NUCLEOTIDE SEQUENCE [LARGE SCALE GENOMIC DNA]</scope>
    <source>
        <strain>PRwf-1</strain>
    </source>
</reference>